<accession>Q3IJ42</accession>
<evidence type="ECO:0000255" key="1">
    <source>
        <dbReference type="HAMAP-Rule" id="MF_00518"/>
    </source>
</evidence>
<protein>
    <recommendedName>
        <fullName evidence="1">D-aminoacyl-tRNA deacylase</fullName>
        <shortName evidence="1">DTD</shortName>
        <ecNumber evidence="1">3.1.1.96</ecNumber>
    </recommendedName>
    <alternativeName>
        <fullName evidence="1">Gly-tRNA(Ala) deacylase</fullName>
    </alternativeName>
</protein>
<comment type="function">
    <text evidence="1">An aminoacyl-tRNA editing enzyme that deacylates mischarged D-aminoacyl-tRNAs. Also deacylates mischarged glycyl-tRNA(Ala), protecting cells against glycine mischarging by AlaRS. Acts via tRNA-based rather than protein-based catalysis; rejects L-amino acids rather than detecting D-amino acids in the active site. By recycling D-aminoacyl-tRNA to D-amino acids and free tRNA molecules, this enzyme counteracts the toxicity associated with the formation of D-aminoacyl-tRNA entities in vivo and helps enforce protein L-homochirality.</text>
</comment>
<comment type="catalytic activity">
    <reaction evidence="1">
        <text>glycyl-tRNA(Ala) + H2O = tRNA(Ala) + glycine + H(+)</text>
        <dbReference type="Rhea" id="RHEA:53744"/>
        <dbReference type="Rhea" id="RHEA-COMP:9657"/>
        <dbReference type="Rhea" id="RHEA-COMP:13640"/>
        <dbReference type="ChEBI" id="CHEBI:15377"/>
        <dbReference type="ChEBI" id="CHEBI:15378"/>
        <dbReference type="ChEBI" id="CHEBI:57305"/>
        <dbReference type="ChEBI" id="CHEBI:78442"/>
        <dbReference type="ChEBI" id="CHEBI:78522"/>
        <dbReference type="EC" id="3.1.1.96"/>
    </reaction>
</comment>
<comment type="catalytic activity">
    <reaction evidence="1">
        <text>a D-aminoacyl-tRNA + H2O = a tRNA + a D-alpha-amino acid + H(+)</text>
        <dbReference type="Rhea" id="RHEA:13953"/>
        <dbReference type="Rhea" id="RHEA-COMP:10123"/>
        <dbReference type="Rhea" id="RHEA-COMP:10124"/>
        <dbReference type="ChEBI" id="CHEBI:15377"/>
        <dbReference type="ChEBI" id="CHEBI:15378"/>
        <dbReference type="ChEBI" id="CHEBI:59871"/>
        <dbReference type="ChEBI" id="CHEBI:78442"/>
        <dbReference type="ChEBI" id="CHEBI:79333"/>
        <dbReference type="EC" id="3.1.1.96"/>
    </reaction>
</comment>
<comment type="subunit">
    <text evidence="1">Homodimer.</text>
</comment>
<comment type="subcellular location">
    <subcellularLocation>
        <location evidence="1">Cytoplasm</location>
    </subcellularLocation>
</comment>
<comment type="domain">
    <text evidence="1">A Gly-cisPro motif from one monomer fits into the active site of the other monomer to allow specific chiral rejection of L-amino acids.</text>
</comment>
<comment type="similarity">
    <text evidence="1">Belongs to the DTD family.</text>
</comment>
<proteinExistence type="inferred from homology"/>
<keyword id="KW-0963">Cytoplasm</keyword>
<keyword id="KW-0378">Hydrolase</keyword>
<keyword id="KW-1185">Reference proteome</keyword>
<keyword id="KW-0694">RNA-binding</keyword>
<keyword id="KW-0820">tRNA-binding</keyword>
<gene>
    <name evidence="1" type="primary">dtd</name>
    <name type="ordered locus">PSHAa0172</name>
</gene>
<name>DTD_PSET1</name>
<sequence>MQGLIQRVKHAKVEINNQVVGEIGQGILVLLGVEKQDDEQAADKLLHKISNYRIFTDENDKMNLSLKDIAGELLVVSQFTLAANTKKGMRPSFSSAATPSQANELYEYFVAQAKALNLTVAAGEFGADMQVSLCNDGPVTFNLAV</sequence>
<organism>
    <name type="scientific">Pseudoalteromonas translucida (strain TAC 125)</name>
    <dbReference type="NCBI Taxonomy" id="326442"/>
    <lineage>
        <taxon>Bacteria</taxon>
        <taxon>Pseudomonadati</taxon>
        <taxon>Pseudomonadota</taxon>
        <taxon>Gammaproteobacteria</taxon>
        <taxon>Alteromonadales</taxon>
        <taxon>Pseudoalteromonadaceae</taxon>
        <taxon>Pseudoalteromonas</taxon>
    </lineage>
</organism>
<dbReference type="EC" id="3.1.1.96" evidence="1"/>
<dbReference type="EMBL" id="CR954246">
    <property type="protein sequence ID" value="CAI85275.1"/>
    <property type="molecule type" value="Genomic_DNA"/>
</dbReference>
<dbReference type="SMR" id="Q3IJ42"/>
<dbReference type="STRING" id="326442.PSHAa0172"/>
<dbReference type="KEGG" id="pha:PSHAa0172"/>
<dbReference type="PATRIC" id="fig|326442.8.peg.166"/>
<dbReference type="eggNOG" id="COG1490">
    <property type="taxonomic scope" value="Bacteria"/>
</dbReference>
<dbReference type="HOGENOM" id="CLU_076901_1_0_6"/>
<dbReference type="BioCyc" id="PHAL326442:PSHA_RS00870-MONOMER"/>
<dbReference type="Proteomes" id="UP000006843">
    <property type="component" value="Chromosome I"/>
</dbReference>
<dbReference type="GO" id="GO:0005737">
    <property type="term" value="C:cytoplasm"/>
    <property type="evidence" value="ECO:0007669"/>
    <property type="project" value="UniProtKB-SubCell"/>
</dbReference>
<dbReference type="GO" id="GO:0051500">
    <property type="term" value="F:D-tyrosyl-tRNA(Tyr) deacylase activity"/>
    <property type="evidence" value="ECO:0007669"/>
    <property type="project" value="TreeGrafter"/>
</dbReference>
<dbReference type="GO" id="GO:0106026">
    <property type="term" value="F:Gly-tRNA(Ala) deacylase activity"/>
    <property type="evidence" value="ECO:0007669"/>
    <property type="project" value="UniProtKB-UniRule"/>
</dbReference>
<dbReference type="GO" id="GO:0043908">
    <property type="term" value="F:Ser(Gly)-tRNA(Ala) hydrolase activity"/>
    <property type="evidence" value="ECO:0007669"/>
    <property type="project" value="UniProtKB-UniRule"/>
</dbReference>
<dbReference type="GO" id="GO:0000049">
    <property type="term" value="F:tRNA binding"/>
    <property type="evidence" value="ECO:0007669"/>
    <property type="project" value="UniProtKB-UniRule"/>
</dbReference>
<dbReference type="GO" id="GO:0019478">
    <property type="term" value="P:D-amino acid catabolic process"/>
    <property type="evidence" value="ECO:0007669"/>
    <property type="project" value="UniProtKB-UniRule"/>
</dbReference>
<dbReference type="CDD" id="cd00563">
    <property type="entry name" value="Dtyr_deacylase"/>
    <property type="match status" value="1"/>
</dbReference>
<dbReference type="FunFam" id="3.50.80.10:FF:000001">
    <property type="entry name" value="D-aminoacyl-tRNA deacylase"/>
    <property type="match status" value="1"/>
</dbReference>
<dbReference type="Gene3D" id="3.50.80.10">
    <property type="entry name" value="D-tyrosyl-tRNA(Tyr) deacylase"/>
    <property type="match status" value="1"/>
</dbReference>
<dbReference type="HAMAP" id="MF_00518">
    <property type="entry name" value="Deacylase_Dtd"/>
    <property type="match status" value="1"/>
</dbReference>
<dbReference type="InterPro" id="IPR003732">
    <property type="entry name" value="Daa-tRNA_deacyls_DTD"/>
</dbReference>
<dbReference type="InterPro" id="IPR023509">
    <property type="entry name" value="DTD-like_sf"/>
</dbReference>
<dbReference type="NCBIfam" id="TIGR00256">
    <property type="entry name" value="D-aminoacyl-tRNA deacylase"/>
    <property type="match status" value="1"/>
</dbReference>
<dbReference type="PANTHER" id="PTHR10472:SF5">
    <property type="entry name" value="D-AMINOACYL-TRNA DEACYLASE 1"/>
    <property type="match status" value="1"/>
</dbReference>
<dbReference type="PANTHER" id="PTHR10472">
    <property type="entry name" value="D-TYROSYL-TRNA TYR DEACYLASE"/>
    <property type="match status" value="1"/>
</dbReference>
<dbReference type="Pfam" id="PF02580">
    <property type="entry name" value="Tyr_Deacylase"/>
    <property type="match status" value="1"/>
</dbReference>
<dbReference type="SUPFAM" id="SSF69500">
    <property type="entry name" value="DTD-like"/>
    <property type="match status" value="1"/>
</dbReference>
<reference key="1">
    <citation type="journal article" date="2005" name="Genome Res.">
        <title>Coping with cold: the genome of the versatile marine Antarctica bacterium Pseudoalteromonas haloplanktis TAC125.</title>
        <authorList>
            <person name="Medigue C."/>
            <person name="Krin E."/>
            <person name="Pascal G."/>
            <person name="Barbe V."/>
            <person name="Bernsel A."/>
            <person name="Bertin P.N."/>
            <person name="Cheung F."/>
            <person name="Cruveiller S."/>
            <person name="D'Amico S."/>
            <person name="Duilio A."/>
            <person name="Fang G."/>
            <person name="Feller G."/>
            <person name="Ho C."/>
            <person name="Mangenot S."/>
            <person name="Marino G."/>
            <person name="Nilsson J."/>
            <person name="Parrilli E."/>
            <person name="Rocha E.P.C."/>
            <person name="Rouy Z."/>
            <person name="Sekowska A."/>
            <person name="Tutino M.L."/>
            <person name="Vallenet D."/>
            <person name="von Heijne G."/>
            <person name="Danchin A."/>
        </authorList>
    </citation>
    <scope>NUCLEOTIDE SEQUENCE [LARGE SCALE GENOMIC DNA]</scope>
    <source>
        <strain>TAC 125</strain>
    </source>
</reference>
<feature type="chain" id="PRO_0000259296" description="D-aminoacyl-tRNA deacylase">
    <location>
        <begin position="1"/>
        <end position="145"/>
    </location>
</feature>
<feature type="short sequence motif" description="Gly-cisPro motif, important for rejection of L-amino acids" evidence="1">
    <location>
        <begin position="137"/>
        <end position="138"/>
    </location>
</feature>